<dbReference type="EMBL" id="AF032042">
    <property type="protein sequence ID" value="AAC52110.1"/>
    <property type="molecule type" value="Genomic_DNA"/>
</dbReference>
<dbReference type="EMBL" id="AF032041">
    <property type="protein sequence ID" value="AAC52110.1"/>
    <property type="status" value="JOINED"/>
    <property type="molecule type" value="Genomic_DNA"/>
</dbReference>
<dbReference type="BMRB" id="O77521"/>
<dbReference type="SMR" id="O77521"/>
<dbReference type="GO" id="GO:0005576">
    <property type="term" value="C:extracellular region"/>
    <property type="evidence" value="ECO:0007669"/>
    <property type="project" value="UniProtKB-SubCell"/>
</dbReference>
<dbReference type="GO" id="GO:0042612">
    <property type="term" value="C:MHC class I protein complex"/>
    <property type="evidence" value="ECO:0007669"/>
    <property type="project" value="UniProtKB-KW"/>
</dbReference>
<dbReference type="GO" id="GO:0002474">
    <property type="term" value="P:antigen processing and presentation of peptide antigen via MHC class I"/>
    <property type="evidence" value="ECO:0007669"/>
    <property type="project" value="UniProtKB-KW"/>
</dbReference>
<dbReference type="GO" id="GO:0006955">
    <property type="term" value="P:immune response"/>
    <property type="evidence" value="ECO:0007669"/>
    <property type="project" value="InterPro"/>
</dbReference>
<dbReference type="CDD" id="cd05770">
    <property type="entry name" value="IgC1_beta2m"/>
    <property type="match status" value="1"/>
</dbReference>
<dbReference type="FunFam" id="2.60.40.10:FF:001005">
    <property type="entry name" value="Beta-2-microglobulin"/>
    <property type="match status" value="1"/>
</dbReference>
<dbReference type="Gene3D" id="2.60.40.10">
    <property type="entry name" value="Immunoglobulins"/>
    <property type="match status" value="1"/>
</dbReference>
<dbReference type="InterPro" id="IPR015707">
    <property type="entry name" value="B2Microglobulin"/>
</dbReference>
<dbReference type="InterPro" id="IPR007110">
    <property type="entry name" value="Ig-like_dom"/>
</dbReference>
<dbReference type="InterPro" id="IPR036179">
    <property type="entry name" value="Ig-like_dom_sf"/>
</dbReference>
<dbReference type="InterPro" id="IPR013783">
    <property type="entry name" value="Ig-like_fold"/>
</dbReference>
<dbReference type="InterPro" id="IPR003006">
    <property type="entry name" value="Ig/MHC_CS"/>
</dbReference>
<dbReference type="InterPro" id="IPR003597">
    <property type="entry name" value="Ig_C1-set"/>
</dbReference>
<dbReference type="InterPro" id="IPR050160">
    <property type="entry name" value="MHC/Immunoglobulin"/>
</dbReference>
<dbReference type="PANTHER" id="PTHR19944:SF62">
    <property type="entry name" value="BETA-2-MICROGLOBULIN"/>
    <property type="match status" value="1"/>
</dbReference>
<dbReference type="PANTHER" id="PTHR19944">
    <property type="entry name" value="MHC CLASS II-RELATED"/>
    <property type="match status" value="1"/>
</dbReference>
<dbReference type="Pfam" id="PF07654">
    <property type="entry name" value="C1-set"/>
    <property type="match status" value="1"/>
</dbReference>
<dbReference type="SMART" id="SM00407">
    <property type="entry name" value="IGc1"/>
    <property type="match status" value="1"/>
</dbReference>
<dbReference type="SUPFAM" id="SSF48726">
    <property type="entry name" value="Immunoglobulin"/>
    <property type="match status" value="1"/>
</dbReference>
<dbReference type="PROSITE" id="PS50835">
    <property type="entry name" value="IG_LIKE"/>
    <property type="match status" value="1"/>
</dbReference>
<dbReference type="PROSITE" id="PS00290">
    <property type="entry name" value="IG_MHC"/>
    <property type="match status" value="1"/>
</dbReference>
<name>B2MG_MICEM</name>
<keyword id="KW-1015">Disulfide bond</keyword>
<keyword id="KW-0391">Immunity</keyword>
<keyword id="KW-0393">Immunoglobulin domain</keyword>
<keyword id="KW-0490">MHC I</keyword>
<keyword id="KW-0964">Secreted</keyword>
<keyword id="KW-0732">Signal</keyword>
<protein>
    <recommendedName>
        <fullName>Beta-2-microglobulin</fullName>
    </recommendedName>
</protein>
<accession>O77521</accession>
<organism>
    <name type="scientific">Mico emiliae</name>
    <name type="common">Emilia's marmoset</name>
    <name type="synonym">Callithrix emiliae</name>
    <dbReference type="NCBI Taxonomy" id="48842"/>
    <lineage>
        <taxon>Eukaryota</taxon>
        <taxon>Metazoa</taxon>
        <taxon>Chordata</taxon>
        <taxon>Craniata</taxon>
        <taxon>Vertebrata</taxon>
        <taxon>Euteleostomi</taxon>
        <taxon>Mammalia</taxon>
        <taxon>Eutheria</taxon>
        <taxon>Euarchontoglires</taxon>
        <taxon>Primates</taxon>
        <taxon>Haplorrhini</taxon>
        <taxon>Platyrrhini</taxon>
        <taxon>Cebidae</taxon>
        <taxon>Callitrichinae</taxon>
        <taxon>Mico</taxon>
    </lineage>
</organism>
<feature type="signal peptide" evidence="1">
    <location>
        <begin position="1"/>
        <end position="20"/>
    </location>
</feature>
<feature type="chain" id="PRO_0000018760" description="Beta-2-microglobulin">
    <location>
        <begin position="21"/>
        <end position="119"/>
    </location>
</feature>
<feature type="domain" description="Ig-like C1-type">
    <location>
        <begin position="25"/>
        <end position="114"/>
    </location>
</feature>
<feature type="disulfide bond" evidence="2">
    <location>
        <begin position="45"/>
        <end position="100"/>
    </location>
</feature>
<sequence>MACSVVVALLALLSLSGLEAIQHAPKIQVYSRHPAENGKPNFLNCYVSGFHPSDIEVDLLKNGKKIEKVEHSDLSFSKDWSFYLLYYTEFTPNEKDEYACRVSHVTFSTPKTVKWDRNI</sequence>
<evidence type="ECO:0000250" key="1"/>
<evidence type="ECO:0000255" key="2">
    <source>
        <dbReference type="PROSITE-ProRule" id="PRU00114"/>
    </source>
</evidence>
<evidence type="ECO:0000305" key="3"/>
<proteinExistence type="inferred from homology"/>
<comment type="function">
    <text evidence="1">Component of the class I major histocompatibility complex (MHC). Involved in the presentation of peptide antigens to the immune system (By similarity).</text>
</comment>
<comment type="subunit">
    <text evidence="1">Heterodimer of an alpha chain and a beta chain. Beta-2-microglobulin is the beta-chain of major histocompatibility complex class I molecules (By similarity).</text>
</comment>
<comment type="subcellular location">
    <subcellularLocation>
        <location evidence="1">Secreted</location>
    </subcellularLocation>
</comment>
<comment type="similarity">
    <text evidence="3">Belongs to the beta-2-microglobulin family.</text>
</comment>
<gene>
    <name type="primary">B2M</name>
</gene>
<reference key="1">
    <citation type="journal article" date="1998" name="Immunogenetics">
        <title>Beta-2-microglobulin in neotropical primates (Platyrrhini).</title>
        <authorList>
            <person name="Canavez F.C."/>
            <person name="Ladasky J.J."/>
            <person name="Muniz J.A.P.C."/>
            <person name="Seuanez H.N."/>
            <person name="Parham P."/>
        </authorList>
    </citation>
    <scope>NUCLEOTIDE SEQUENCE [GENOMIC DNA]</scope>
    <source>
        <tissue>Blood</tissue>
    </source>
</reference>